<proteinExistence type="evidence at transcript level"/>
<protein>
    <recommendedName>
        <fullName>Zinc finger protein 22</fullName>
    </recommendedName>
    <alternativeName>
        <fullName>Zinc finger protein Krox-25</fullName>
    </alternativeName>
</protein>
<dbReference type="EMBL" id="AF281635">
    <property type="protein sequence ID" value="AAG12467.1"/>
    <property type="status" value="ALT_FRAME"/>
    <property type="molecule type" value="mRNA"/>
</dbReference>
<dbReference type="EMBL" id="BC090354">
    <property type="protein sequence ID" value="AAH90354.1"/>
    <property type="molecule type" value="mRNA"/>
</dbReference>
<dbReference type="RefSeq" id="NP_001012763.1">
    <property type="nucleotide sequence ID" value="NM_001012745.1"/>
</dbReference>
<dbReference type="RefSeq" id="XP_006237249.1">
    <property type="nucleotide sequence ID" value="XM_006237187.3"/>
</dbReference>
<dbReference type="RefSeq" id="XP_006237251.1">
    <property type="nucleotide sequence ID" value="XM_006237189.3"/>
</dbReference>
<dbReference type="RefSeq" id="XP_006237252.1">
    <property type="nucleotide sequence ID" value="XM_006237190.3"/>
</dbReference>
<dbReference type="RefSeq" id="XP_008761471.1">
    <property type="nucleotide sequence ID" value="XM_008763249.1"/>
</dbReference>
<dbReference type="SMR" id="Q9ERU2"/>
<dbReference type="FunCoup" id="Q9ERU2">
    <property type="interactions" value="384"/>
</dbReference>
<dbReference type="STRING" id="10116.ENSRNOP00000018050"/>
<dbReference type="iPTMnet" id="Q9ERU2"/>
<dbReference type="PhosphoSitePlus" id="Q9ERU2"/>
<dbReference type="PaxDb" id="10116-ENSRNOP00000018050"/>
<dbReference type="Ensembl" id="ENSRNOT00000018050.5">
    <property type="protein sequence ID" value="ENSRNOP00000018050.4"/>
    <property type="gene ID" value="ENSRNOG00000013379.5"/>
</dbReference>
<dbReference type="Ensembl" id="ENSRNOT00000097804.1">
    <property type="protein sequence ID" value="ENSRNOP00000076367.1"/>
    <property type="gene ID" value="ENSRNOG00000013379.5"/>
</dbReference>
<dbReference type="Ensembl" id="ENSRNOT00000105818.1">
    <property type="protein sequence ID" value="ENSRNOP00000085999.1"/>
    <property type="gene ID" value="ENSRNOG00000013379.5"/>
</dbReference>
<dbReference type="GeneID" id="360389"/>
<dbReference type="KEGG" id="rno:360389"/>
<dbReference type="UCSC" id="RGD:620229">
    <property type="organism name" value="rat"/>
</dbReference>
<dbReference type="AGR" id="RGD:620229"/>
<dbReference type="CTD" id="67255"/>
<dbReference type="RGD" id="620229">
    <property type="gene designation" value="Zfp422"/>
</dbReference>
<dbReference type="eggNOG" id="KOG1721">
    <property type="taxonomic scope" value="Eukaryota"/>
</dbReference>
<dbReference type="GeneTree" id="ENSGT01130000278272"/>
<dbReference type="HOGENOM" id="CLU_002678_21_0_1"/>
<dbReference type="InParanoid" id="Q9ERU2"/>
<dbReference type="OMA" id="WGVTVRF"/>
<dbReference type="OrthoDB" id="6077919at2759"/>
<dbReference type="PhylomeDB" id="Q9ERU2"/>
<dbReference type="TreeFam" id="TF350836"/>
<dbReference type="PRO" id="PR:Q9ERU2"/>
<dbReference type="Proteomes" id="UP000002494">
    <property type="component" value="Chromosome 4"/>
</dbReference>
<dbReference type="Bgee" id="ENSRNOG00000013379">
    <property type="expression patterns" value="Expressed in thymus and 20 other cell types or tissues"/>
</dbReference>
<dbReference type="GO" id="GO:0005654">
    <property type="term" value="C:nucleoplasm"/>
    <property type="evidence" value="ECO:0007669"/>
    <property type="project" value="Ensembl"/>
</dbReference>
<dbReference type="GO" id="GO:0005634">
    <property type="term" value="C:nucleus"/>
    <property type="evidence" value="ECO:0000314"/>
    <property type="project" value="UniProtKB"/>
</dbReference>
<dbReference type="GO" id="GO:0003677">
    <property type="term" value="F:DNA binding"/>
    <property type="evidence" value="ECO:0000250"/>
    <property type="project" value="UniProtKB"/>
</dbReference>
<dbReference type="GO" id="GO:0003700">
    <property type="term" value="F:DNA-binding transcription factor activity"/>
    <property type="evidence" value="ECO:0000318"/>
    <property type="project" value="GO_Central"/>
</dbReference>
<dbReference type="GO" id="GO:0000978">
    <property type="term" value="F:RNA polymerase II cis-regulatory region sequence-specific DNA binding"/>
    <property type="evidence" value="ECO:0000318"/>
    <property type="project" value="GO_Central"/>
</dbReference>
<dbReference type="GO" id="GO:0008270">
    <property type="term" value="F:zinc ion binding"/>
    <property type="evidence" value="ECO:0007669"/>
    <property type="project" value="UniProtKB-KW"/>
</dbReference>
<dbReference type="GO" id="GO:0042476">
    <property type="term" value="P:odontogenesis"/>
    <property type="evidence" value="ECO:0000303"/>
    <property type="project" value="UniProtKB"/>
</dbReference>
<dbReference type="GO" id="GO:0006355">
    <property type="term" value="P:regulation of DNA-templated transcription"/>
    <property type="evidence" value="ECO:0000303"/>
    <property type="project" value="UniProtKB"/>
</dbReference>
<dbReference type="GO" id="GO:0006357">
    <property type="term" value="P:regulation of transcription by RNA polymerase II"/>
    <property type="evidence" value="ECO:0000318"/>
    <property type="project" value="GO_Central"/>
</dbReference>
<dbReference type="FunFam" id="3.30.160.60:FF:000644">
    <property type="entry name" value="Zinc finger protein 22"/>
    <property type="match status" value="1"/>
</dbReference>
<dbReference type="FunFam" id="3.30.160.60:FF:000670">
    <property type="entry name" value="zinc finger protein 22"/>
    <property type="match status" value="1"/>
</dbReference>
<dbReference type="FunFam" id="3.30.160.60:FF:000817">
    <property type="entry name" value="zinc finger protein 22"/>
    <property type="match status" value="1"/>
</dbReference>
<dbReference type="FunFam" id="3.30.160.60:FF:001158">
    <property type="entry name" value="zinc finger protein 22"/>
    <property type="match status" value="2"/>
</dbReference>
<dbReference type="Gene3D" id="3.30.160.60">
    <property type="entry name" value="Classic Zinc Finger"/>
    <property type="match status" value="5"/>
</dbReference>
<dbReference type="InterPro" id="IPR036236">
    <property type="entry name" value="Znf_C2H2_sf"/>
</dbReference>
<dbReference type="InterPro" id="IPR013087">
    <property type="entry name" value="Znf_C2H2_type"/>
</dbReference>
<dbReference type="PANTHER" id="PTHR23226">
    <property type="entry name" value="ZINC FINGER AND SCAN DOMAIN-CONTAINING"/>
    <property type="match status" value="1"/>
</dbReference>
<dbReference type="PANTHER" id="PTHR23226:SF402">
    <property type="entry name" value="ZINC FINGER PROTEIN 22"/>
    <property type="match status" value="1"/>
</dbReference>
<dbReference type="Pfam" id="PF00096">
    <property type="entry name" value="zf-C2H2"/>
    <property type="match status" value="5"/>
</dbReference>
<dbReference type="SMART" id="SM00355">
    <property type="entry name" value="ZnF_C2H2"/>
    <property type="match status" value="5"/>
</dbReference>
<dbReference type="SUPFAM" id="SSF57667">
    <property type="entry name" value="beta-beta-alpha zinc fingers"/>
    <property type="match status" value="3"/>
</dbReference>
<dbReference type="PROSITE" id="PS00028">
    <property type="entry name" value="ZINC_FINGER_C2H2_1"/>
    <property type="match status" value="5"/>
</dbReference>
<dbReference type="PROSITE" id="PS50157">
    <property type="entry name" value="ZINC_FINGER_C2H2_2"/>
    <property type="match status" value="5"/>
</dbReference>
<organism evidence="6">
    <name type="scientific">Rattus norvegicus</name>
    <name type="common">Rat</name>
    <dbReference type="NCBI Taxonomy" id="10116"/>
    <lineage>
        <taxon>Eukaryota</taxon>
        <taxon>Metazoa</taxon>
        <taxon>Chordata</taxon>
        <taxon>Craniata</taxon>
        <taxon>Vertebrata</taxon>
        <taxon>Euteleostomi</taxon>
        <taxon>Mammalia</taxon>
        <taxon>Eutheria</taxon>
        <taxon>Euarchontoglires</taxon>
        <taxon>Glires</taxon>
        <taxon>Rodentia</taxon>
        <taxon>Myomorpha</taxon>
        <taxon>Muroidea</taxon>
        <taxon>Muridae</taxon>
        <taxon>Murinae</taxon>
        <taxon>Rattus</taxon>
    </lineage>
</organism>
<sequence>MRLGKPKGGISRSASQGKTYESKRKTARQRQKWGVAIRFDSGLSRRRRNVDEKPYKCTKCSKSFSQSSTLFQHKKIHTGKKSHKCADCGKSFFQSSNLIQHRRIHTGEKPYKCDECGERFKQSSNLIQHQRIHTGEKPYCCDECGRCFSQSSHLIQHQRTHTGEKPYQCEECDKCFSQSSHLRQHMKVHKEKKSHKRGKNARAKTHPVSWKRGKGRKAVAGLRQVKGAASGLFKKKK</sequence>
<name>ZNF22_RAT</name>
<keyword id="KW-0007">Acetylation</keyword>
<keyword id="KW-0238">DNA-binding</keyword>
<keyword id="KW-0479">Metal-binding</keyword>
<keyword id="KW-0539">Nucleus</keyword>
<keyword id="KW-1185">Reference proteome</keyword>
<keyword id="KW-0677">Repeat</keyword>
<keyword id="KW-0804">Transcription</keyword>
<keyword id="KW-0805">Transcription regulation</keyword>
<keyword id="KW-0862">Zinc</keyword>
<keyword id="KW-0863">Zinc-finger</keyword>
<feature type="chain" id="PRO_0000047350" description="Zinc finger protein 22">
    <location>
        <begin position="1"/>
        <end position="237"/>
    </location>
</feature>
<feature type="zinc finger region" description="C2H2-type 1" evidence="2">
    <location>
        <begin position="55"/>
        <end position="82"/>
    </location>
</feature>
<feature type="zinc finger region" description="C2H2-type 2" evidence="2">
    <location>
        <begin position="83"/>
        <end position="110"/>
    </location>
</feature>
<feature type="zinc finger region" description="C2H2-type 3" evidence="2">
    <location>
        <begin position="111"/>
        <end position="138"/>
    </location>
</feature>
<feature type="zinc finger region" description="C2H2-type 4" evidence="2">
    <location>
        <begin position="139"/>
        <end position="166"/>
    </location>
</feature>
<feature type="zinc finger region" description="C2H2-type 5" evidence="2">
    <location>
        <begin position="167"/>
        <end position="194"/>
    </location>
</feature>
<feature type="region of interest" description="Disordered" evidence="3">
    <location>
        <begin position="1"/>
        <end position="33"/>
    </location>
</feature>
<feature type="region of interest" description="Disordered" evidence="3">
    <location>
        <begin position="188"/>
        <end position="218"/>
    </location>
</feature>
<feature type="compositionally biased region" description="Basic residues" evidence="3">
    <location>
        <begin position="188"/>
        <end position="217"/>
    </location>
</feature>
<feature type="modified residue" description="N6-acetyllysine" evidence="1">
    <location>
        <position position="18"/>
    </location>
</feature>
<feature type="modified residue" description="N6-acetyllysine" evidence="1">
    <location>
        <position position="23"/>
    </location>
</feature>
<feature type="sequence conflict" description="In Ref. 1; AAG12467." evidence="5" ref="1">
    <original>P</original>
    <variation>PQ</variation>
    <location>
        <position position="6"/>
    </location>
</feature>
<feature type="sequence conflict" description="In Ref. 1; AAG12467." evidence="5" ref="1">
    <original>S</original>
    <variation>T</variation>
    <location>
        <position position="15"/>
    </location>
</feature>
<feature type="sequence conflict" description="In Ref. 1; AAG12467." evidence="5" ref="1">
    <original>K</original>
    <variation>R</variation>
    <location>
        <position position="23"/>
    </location>
</feature>
<feature type="sequence conflict" description="In Ref. 1; AAG12467." evidence="5" ref="1">
    <original>C</original>
    <variation>Y</variation>
    <location>
        <position position="140"/>
    </location>
</feature>
<feature type="sequence conflict" description="In Ref. 1; AAG12467." evidence="5" ref="1">
    <original>S</original>
    <variation>N</variation>
    <location>
        <position position="179"/>
    </location>
</feature>
<feature type="sequence conflict" description="In Ref. 1; AAG12467." evidence="5" ref="1">
    <original>K</original>
    <variation>Q</variation>
    <location>
        <position position="190"/>
    </location>
</feature>
<reference evidence="5" key="1">
    <citation type="journal article" date="2004" name="Genomics">
        <title>Molecular cloning, chromosomal mapping, and characteristic expression in tooth organ of rat and mouse Krox-25.</title>
        <authorList>
            <person name="Lee S.K."/>
            <person name="Kim Y.S."/>
            <person name="Lee S.S."/>
            <person name="Lee Y.J."/>
            <person name="Song I.S."/>
            <person name="Park S.C."/>
            <person name="Kozak C."/>
            <person name="Yamada Y."/>
        </authorList>
    </citation>
    <scope>NUCLEOTIDE SEQUENCE [MRNA]</scope>
    <scope>SUBCELLULAR LOCATION</scope>
    <scope>TISSUE SPECIFICITY</scope>
    <scope>DEVELOPMENTAL STAGE</scope>
    <source>
        <strain evidence="6">Sprague-Dawley</strain>
    </source>
</reference>
<reference key="2">
    <citation type="journal article" date="2004" name="Genome Res.">
        <title>The status, quality, and expansion of the NIH full-length cDNA project: the Mammalian Gene Collection (MGC).</title>
        <authorList>
            <consortium name="The MGC Project Team"/>
        </authorList>
    </citation>
    <scope>NUCLEOTIDE SEQUENCE [LARGE SCALE MRNA]</scope>
    <source>
        <tissue>Brain</tissue>
    </source>
</reference>
<comment type="function">
    <text evidence="1">Binds DNA through the consensus sequence 5'-CAATG-3'. May be involved in transcriptional regulation and may play a role in tooth formation (By similarity).</text>
</comment>
<comment type="subcellular location">
    <subcellularLocation>
        <location evidence="4">Nucleus</location>
    </subcellularLocation>
</comment>
<comment type="tissue specificity">
    <text evidence="4">Highly expressed in the ameloblast layer of mandibular incisors, moderately expressed in submandibular gland, calvaria, kidney and lung, and expressed at low levels in brain and thymus.</text>
</comment>
<comment type="developmental stage">
    <text evidence="4">Highly expressed in presecretory ameloblasts with very high expression in secretory ameloblasts. Expression decreases in the maturation stage and is very low in the late maturation stage.</text>
</comment>
<comment type="similarity">
    <text evidence="5">Belongs to the krueppel C2H2-type zinc-finger protein family.</text>
</comment>
<comment type="sequence caution" evidence="5">
    <conflict type="frameshift">
        <sequence resource="EMBL-CDS" id="AAG12467"/>
    </conflict>
</comment>
<gene>
    <name type="primary">Znf22</name>
    <name type="synonym">Krox25</name>
    <name type="synonym">Zfp422</name>
</gene>
<accession>Q9ERU2</accession>
<accession>Q5EAN1</accession>
<evidence type="ECO:0000250" key="1">
    <source>
        <dbReference type="UniProtKB" id="Q9ERU3"/>
    </source>
</evidence>
<evidence type="ECO:0000255" key="2">
    <source>
        <dbReference type="PROSITE-ProRule" id="PRU00042"/>
    </source>
</evidence>
<evidence type="ECO:0000256" key="3">
    <source>
        <dbReference type="SAM" id="MobiDB-lite"/>
    </source>
</evidence>
<evidence type="ECO:0000269" key="4">
    <source>
    </source>
</evidence>
<evidence type="ECO:0000305" key="5"/>
<evidence type="ECO:0000312" key="6">
    <source>
        <dbReference type="EMBL" id="AAG12467.1"/>
    </source>
</evidence>